<dbReference type="EC" id="2.4.1.21" evidence="1"/>
<dbReference type="EMBL" id="AE001273">
    <property type="protein sequence ID" value="AAC68393.1"/>
    <property type="molecule type" value="Genomic_DNA"/>
</dbReference>
<dbReference type="PIR" id="D71469">
    <property type="entry name" value="D71469"/>
</dbReference>
<dbReference type="RefSeq" id="NP_220318.1">
    <property type="nucleotide sequence ID" value="NC_000117.1"/>
</dbReference>
<dbReference type="RefSeq" id="WP_009872180.1">
    <property type="nucleotide sequence ID" value="NC_000117.1"/>
</dbReference>
<dbReference type="SMR" id="O84804"/>
<dbReference type="FunCoup" id="O84804">
    <property type="interactions" value="55"/>
</dbReference>
<dbReference type="STRING" id="272561.CT_798"/>
<dbReference type="CAZy" id="GT5">
    <property type="family name" value="Glycosyltransferase Family 5"/>
</dbReference>
<dbReference type="EnsemblBacteria" id="AAC68393">
    <property type="protein sequence ID" value="AAC68393"/>
    <property type="gene ID" value="CT_798"/>
</dbReference>
<dbReference type="GeneID" id="884597"/>
<dbReference type="KEGG" id="ctr:CT_798"/>
<dbReference type="PATRIC" id="fig|272561.5.peg.878"/>
<dbReference type="HOGENOM" id="CLU_009583_18_3_0"/>
<dbReference type="InParanoid" id="O84804"/>
<dbReference type="OrthoDB" id="9808590at2"/>
<dbReference type="UniPathway" id="UPA00164"/>
<dbReference type="Proteomes" id="UP000000431">
    <property type="component" value="Chromosome"/>
</dbReference>
<dbReference type="GO" id="GO:0009011">
    <property type="term" value="F:alpha-1,4-glucan glucosyltransferase (ADP-glucose donor) activity"/>
    <property type="evidence" value="ECO:0007669"/>
    <property type="project" value="UniProtKB-UniRule"/>
</dbReference>
<dbReference type="GO" id="GO:0004373">
    <property type="term" value="F:alpha-1,4-glucan glucosyltransferase (UDP-glucose donor) activity"/>
    <property type="evidence" value="ECO:0007669"/>
    <property type="project" value="InterPro"/>
</dbReference>
<dbReference type="GO" id="GO:0005978">
    <property type="term" value="P:glycogen biosynthetic process"/>
    <property type="evidence" value="ECO:0007669"/>
    <property type="project" value="UniProtKB-UniRule"/>
</dbReference>
<dbReference type="CDD" id="cd03791">
    <property type="entry name" value="GT5_Glycogen_synthase_DULL1-like"/>
    <property type="match status" value="1"/>
</dbReference>
<dbReference type="Gene3D" id="3.40.50.2000">
    <property type="entry name" value="Glycogen Phosphorylase B"/>
    <property type="match status" value="2"/>
</dbReference>
<dbReference type="HAMAP" id="MF_00484">
    <property type="entry name" value="Glycogen_synth"/>
    <property type="match status" value="1"/>
</dbReference>
<dbReference type="InterPro" id="IPR001296">
    <property type="entry name" value="Glyco_trans_1"/>
</dbReference>
<dbReference type="InterPro" id="IPR011835">
    <property type="entry name" value="GS/SS"/>
</dbReference>
<dbReference type="InterPro" id="IPR013534">
    <property type="entry name" value="Starch_synth_cat_dom"/>
</dbReference>
<dbReference type="NCBIfam" id="TIGR02095">
    <property type="entry name" value="glgA"/>
    <property type="match status" value="1"/>
</dbReference>
<dbReference type="NCBIfam" id="NF001904">
    <property type="entry name" value="PRK00654.2-3"/>
    <property type="match status" value="1"/>
</dbReference>
<dbReference type="PANTHER" id="PTHR46083">
    <property type="match status" value="1"/>
</dbReference>
<dbReference type="PANTHER" id="PTHR46083:SF1">
    <property type="entry name" value="GLYCOGEN SYNTHASE 2-RELATED"/>
    <property type="match status" value="1"/>
</dbReference>
<dbReference type="Pfam" id="PF08323">
    <property type="entry name" value="Glyco_transf_5"/>
    <property type="match status" value="1"/>
</dbReference>
<dbReference type="Pfam" id="PF00534">
    <property type="entry name" value="Glycos_transf_1"/>
    <property type="match status" value="1"/>
</dbReference>
<dbReference type="SUPFAM" id="SSF53756">
    <property type="entry name" value="UDP-Glycosyltransferase/glycogen phosphorylase"/>
    <property type="match status" value="1"/>
</dbReference>
<feature type="chain" id="PRO_0000188606" description="Glycogen synthase">
    <location>
        <begin position="1"/>
        <end position="474"/>
    </location>
</feature>
<feature type="binding site" evidence="1">
    <location>
        <position position="15"/>
    </location>
    <ligand>
        <name>ADP-alpha-D-glucose</name>
        <dbReference type="ChEBI" id="CHEBI:57498"/>
    </ligand>
</feature>
<keyword id="KW-0320">Glycogen biosynthesis</keyword>
<keyword id="KW-0328">Glycosyltransferase</keyword>
<keyword id="KW-1185">Reference proteome</keyword>
<keyword id="KW-0808">Transferase</keyword>
<gene>
    <name evidence="1" type="primary">glgA</name>
    <name type="ordered locus">CT_798</name>
</gene>
<protein>
    <recommendedName>
        <fullName evidence="1">Glycogen synthase</fullName>
        <ecNumber evidence="1">2.4.1.21</ecNumber>
    </recommendedName>
    <alternativeName>
        <fullName evidence="1">Starch [bacterial glycogen] synthase</fullName>
    </alternativeName>
</protein>
<organism>
    <name type="scientific">Chlamydia trachomatis serovar D (strain ATCC VR-885 / DSM 19411 / UW-3/Cx)</name>
    <dbReference type="NCBI Taxonomy" id="272561"/>
    <lineage>
        <taxon>Bacteria</taxon>
        <taxon>Pseudomonadati</taxon>
        <taxon>Chlamydiota</taxon>
        <taxon>Chlamydiia</taxon>
        <taxon>Chlamydiales</taxon>
        <taxon>Chlamydiaceae</taxon>
        <taxon>Chlamydia/Chlamydophila group</taxon>
        <taxon>Chlamydia</taxon>
    </lineage>
</organism>
<proteinExistence type="inferred from homology"/>
<reference key="1">
    <citation type="journal article" date="1998" name="Science">
        <title>Genome sequence of an obligate intracellular pathogen of humans: Chlamydia trachomatis.</title>
        <authorList>
            <person name="Stephens R.S."/>
            <person name="Kalman S."/>
            <person name="Lammel C.J."/>
            <person name="Fan J."/>
            <person name="Marathe R."/>
            <person name="Aravind L."/>
            <person name="Mitchell W.P."/>
            <person name="Olinger L."/>
            <person name="Tatusov R.L."/>
            <person name="Zhao Q."/>
            <person name="Koonin E.V."/>
            <person name="Davis R.W."/>
        </authorList>
    </citation>
    <scope>NUCLEOTIDE SEQUENCE [LARGE SCALE GENOMIC DNA]</scope>
    <source>
        <strain>ATCC VR-885 / DSM 19411 / UW-3/Cx</strain>
    </source>
</reference>
<sequence>MKIIHTAIEFAPVIKAGGLGDALYGLAKALAANHTTEVVIPLYPKLFTLPKEQDLCSIQKLSYFFAGEQEATAFSYFYEGIKVTLFKLDTQPELFENAETIYTSDDAFRFCAFSAAAASYIQKEGANIVHLHDWHTGLVAGLLKQQPCSQLQKIVLTLHNFGYRGYTTREILEASSLNEFYISQYQLFRDPQTCVLLKGALYCSDFVTTVSPTYAKEILEDYSDYEIHDAITARQHHLRGILNGIDTTIWGPETDPNLAKNYTKELFETPSIFFEAKAENKKALYERLGLSLEHSPCVCIISRIAEQKGPHFMKQAILHALENAYTLIIIGTCYGNQLHEEFANLQESLANSPDVRILLTYSDVLARQIFAAADMICIPSMFEPCGLTQMIGMRYGTVPLVRATGGLADTVANGINGFSFFNPHDFYEFRNMLSEAVTTYRTNHDKWQHIVRACLDFSSDLETAANKYLEIYKQ</sequence>
<name>GLGA_CHLTR</name>
<accession>O84804</accession>
<evidence type="ECO:0000255" key="1">
    <source>
        <dbReference type="HAMAP-Rule" id="MF_00484"/>
    </source>
</evidence>
<comment type="function">
    <text evidence="1">Synthesizes alpha-1,4-glucan chains using ADP-glucose.</text>
</comment>
<comment type="catalytic activity">
    <reaction evidence="1">
        <text>[(1-&gt;4)-alpha-D-glucosyl](n) + ADP-alpha-D-glucose = [(1-&gt;4)-alpha-D-glucosyl](n+1) + ADP + H(+)</text>
        <dbReference type="Rhea" id="RHEA:18189"/>
        <dbReference type="Rhea" id="RHEA-COMP:9584"/>
        <dbReference type="Rhea" id="RHEA-COMP:9587"/>
        <dbReference type="ChEBI" id="CHEBI:15378"/>
        <dbReference type="ChEBI" id="CHEBI:15444"/>
        <dbReference type="ChEBI" id="CHEBI:57498"/>
        <dbReference type="ChEBI" id="CHEBI:456216"/>
        <dbReference type="EC" id="2.4.1.21"/>
    </reaction>
</comment>
<comment type="pathway">
    <text evidence="1">Glycan biosynthesis; glycogen biosynthesis.</text>
</comment>
<comment type="similarity">
    <text evidence="1">Belongs to the glycosyltransferase 1 family. Bacterial/plant glycogen synthase subfamily.</text>
</comment>